<gene>
    <name evidence="1" type="primary">mraY</name>
    <name type="ordered locus">HPSH_04450</name>
</gene>
<evidence type="ECO:0000255" key="1">
    <source>
        <dbReference type="HAMAP-Rule" id="MF_00038"/>
    </source>
</evidence>
<proteinExistence type="inferred from homology"/>
<comment type="function">
    <text evidence="1">Catalyzes the initial step of the lipid cycle reactions in the biosynthesis of the cell wall peptidoglycan: transfers peptidoglycan precursor phospho-MurNAc-pentapeptide from UDP-MurNAc-pentapeptide onto the lipid carrier undecaprenyl phosphate, yielding undecaprenyl-pyrophosphoryl-MurNAc-pentapeptide, known as lipid I.</text>
</comment>
<comment type="catalytic activity">
    <reaction evidence="1">
        <text>UDP-N-acetyl-alpha-D-muramoyl-L-alanyl-gamma-D-glutamyl-meso-2,6-diaminopimeloyl-D-alanyl-D-alanine + di-trans,octa-cis-undecaprenyl phosphate = di-trans,octa-cis-undecaprenyl diphospho-N-acetyl-alpha-D-muramoyl-L-alanyl-D-glutamyl-meso-2,6-diaminopimeloyl-D-alanyl-D-alanine + UMP</text>
        <dbReference type="Rhea" id="RHEA:28386"/>
        <dbReference type="ChEBI" id="CHEBI:57865"/>
        <dbReference type="ChEBI" id="CHEBI:60392"/>
        <dbReference type="ChEBI" id="CHEBI:61386"/>
        <dbReference type="ChEBI" id="CHEBI:61387"/>
        <dbReference type="EC" id="2.7.8.13"/>
    </reaction>
</comment>
<comment type="cofactor">
    <cofactor evidence="1">
        <name>Mg(2+)</name>
        <dbReference type="ChEBI" id="CHEBI:18420"/>
    </cofactor>
</comment>
<comment type="pathway">
    <text evidence="1">Cell wall biogenesis; peptidoglycan biosynthesis.</text>
</comment>
<comment type="subcellular location">
    <subcellularLocation>
        <location evidence="1">Cell inner membrane</location>
        <topology evidence="1">Multi-pass membrane protein</topology>
    </subcellularLocation>
</comment>
<comment type="similarity">
    <text evidence="1">Belongs to the glycosyltransferase 4 family. MraY subfamily.</text>
</comment>
<sequence>MLYSLLYGYFNINLFQYLTFRAGLGFFIAFFLTLFLMPKFILWAKAKKANQPISSFVPSHQNKKDTPTMGGIVFVFATIVASVLCASLGNLYVLLGMIVLVGFSFVGFKDDYTKINQQNNAGMSVKMKFGMLFVLSLVVSVLLSLKGLDTFLYAPFLKNPLFEMPTILAVGFWVLVFLSTSNAVNLTDGLDGLASVPSIFTLLSLSIFVYVAGNAEFSKYLLYPKVIDVGELFVISLALVGSLFGFLWYNCNPASVFMGDSGSLALGGFIAYNAIVSHNEILLVLMGLIFVVETLSVILQVGSYKTRKKRLFLMAPIHHHFEQKGWAENKVIVRFWIISMLSNLVALLSLKVR</sequence>
<keyword id="KW-0131">Cell cycle</keyword>
<keyword id="KW-0132">Cell division</keyword>
<keyword id="KW-0997">Cell inner membrane</keyword>
<keyword id="KW-1003">Cell membrane</keyword>
<keyword id="KW-0133">Cell shape</keyword>
<keyword id="KW-0961">Cell wall biogenesis/degradation</keyword>
<keyword id="KW-0460">Magnesium</keyword>
<keyword id="KW-0472">Membrane</keyword>
<keyword id="KW-0479">Metal-binding</keyword>
<keyword id="KW-0573">Peptidoglycan synthesis</keyword>
<keyword id="KW-0808">Transferase</keyword>
<keyword id="KW-0812">Transmembrane</keyword>
<keyword id="KW-1133">Transmembrane helix</keyword>
<reference key="1">
    <citation type="submission" date="2008-05" db="EMBL/GenBank/DDBJ databases">
        <title>Genome sequence of Helicobacter pylori from the remote Amazon: traces of Asian ancestry of the first Americans.</title>
        <authorList>
            <person name="Kersulyte D."/>
            <person name="Kalia A."/>
            <person name="Gilman R.H."/>
            <person name="Berg D.E."/>
        </authorList>
    </citation>
    <scope>NUCLEOTIDE SEQUENCE [LARGE SCALE GENOMIC DNA]</scope>
    <source>
        <strain>Shi470</strain>
    </source>
</reference>
<organism>
    <name type="scientific">Helicobacter pylori (strain Shi470)</name>
    <dbReference type="NCBI Taxonomy" id="512562"/>
    <lineage>
        <taxon>Bacteria</taxon>
        <taxon>Pseudomonadati</taxon>
        <taxon>Campylobacterota</taxon>
        <taxon>Epsilonproteobacteria</taxon>
        <taxon>Campylobacterales</taxon>
        <taxon>Helicobacteraceae</taxon>
        <taxon>Helicobacter</taxon>
    </lineage>
</organism>
<name>MRAY_HELPS</name>
<accession>B2UTZ3</accession>
<dbReference type="EC" id="2.7.8.13" evidence="1"/>
<dbReference type="EMBL" id="CP001072">
    <property type="protein sequence ID" value="ACD48325.1"/>
    <property type="molecule type" value="Genomic_DNA"/>
</dbReference>
<dbReference type="RefSeq" id="WP_000967133.1">
    <property type="nucleotide sequence ID" value="NC_010698.2"/>
</dbReference>
<dbReference type="SMR" id="B2UTZ3"/>
<dbReference type="KEGG" id="hps:HPSH_04450"/>
<dbReference type="HOGENOM" id="CLU_023982_0_0_7"/>
<dbReference type="UniPathway" id="UPA00219"/>
<dbReference type="GO" id="GO:0005886">
    <property type="term" value="C:plasma membrane"/>
    <property type="evidence" value="ECO:0007669"/>
    <property type="project" value="UniProtKB-SubCell"/>
</dbReference>
<dbReference type="GO" id="GO:0046872">
    <property type="term" value="F:metal ion binding"/>
    <property type="evidence" value="ECO:0007669"/>
    <property type="project" value="UniProtKB-KW"/>
</dbReference>
<dbReference type="GO" id="GO:0008963">
    <property type="term" value="F:phospho-N-acetylmuramoyl-pentapeptide-transferase activity"/>
    <property type="evidence" value="ECO:0007669"/>
    <property type="project" value="UniProtKB-UniRule"/>
</dbReference>
<dbReference type="GO" id="GO:0051992">
    <property type="term" value="F:UDP-N-acetylmuramoyl-L-alanyl-D-glutamyl-meso-2,6-diaminopimelyl-D-alanyl-D-alanine:undecaprenyl-phosphate transferase activity"/>
    <property type="evidence" value="ECO:0007669"/>
    <property type="project" value="RHEA"/>
</dbReference>
<dbReference type="GO" id="GO:0051301">
    <property type="term" value="P:cell division"/>
    <property type="evidence" value="ECO:0007669"/>
    <property type="project" value="UniProtKB-KW"/>
</dbReference>
<dbReference type="GO" id="GO:0071555">
    <property type="term" value="P:cell wall organization"/>
    <property type="evidence" value="ECO:0007669"/>
    <property type="project" value="UniProtKB-KW"/>
</dbReference>
<dbReference type="GO" id="GO:0009252">
    <property type="term" value="P:peptidoglycan biosynthetic process"/>
    <property type="evidence" value="ECO:0007669"/>
    <property type="project" value="UniProtKB-UniRule"/>
</dbReference>
<dbReference type="GO" id="GO:0008360">
    <property type="term" value="P:regulation of cell shape"/>
    <property type="evidence" value="ECO:0007669"/>
    <property type="project" value="UniProtKB-KW"/>
</dbReference>
<dbReference type="CDD" id="cd06852">
    <property type="entry name" value="GT_MraY"/>
    <property type="match status" value="1"/>
</dbReference>
<dbReference type="HAMAP" id="MF_00038">
    <property type="entry name" value="MraY"/>
    <property type="match status" value="1"/>
</dbReference>
<dbReference type="InterPro" id="IPR000715">
    <property type="entry name" value="Glycosyl_transferase_4"/>
</dbReference>
<dbReference type="InterPro" id="IPR003524">
    <property type="entry name" value="PNAcMuramoyl-5peptid_Trfase"/>
</dbReference>
<dbReference type="InterPro" id="IPR018480">
    <property type="entry name" value="PNAcMuramoyl-5peptid_Trfase_CS"/>
</dbReference>
<dbReference type="NCBIfam" id="TIGR00445">
    <property type="entry name" value="mraY"/>
    <property type="match status" value="1"/>
</dbReference>
<dbReference type="PANTHER" id="PTHR22926">
    <property type="entry name" value="PHOSPHO-N-ACETYLMURAMOYL-PENTAPEPTIDE-TRANSFERASE"/>
    <property type="match status" value="1"/>
</dbReference>
<dbReference type="PANTHER" id="PTHR22926:SF5">
    <property type="entry name" value="PHOSPHO-N-ACETYLMURAMOYL-PENTAPEPTIDE-TRANSFERASE HOMOLOG"/>
    <property type="match status" value="1"/>
</dbReference>
<dbReference type="Pfam" id="PF00953">
    <property type="entry name" value="Glycos_transf_4"/>
    <property type="match status" value="1"/>
</dbReference>
<dbReference type="Pfam" id="PF10555">
    <property type="entry name" value="MraY_sig1"/>
    <property type="match status" value="1"/>
</dbReference>
<dbReference type="PROSITE" id="PS01347">
    <property type="entry name" value="MRAY_1"/>
    <property type="match status" value="1"/>
</dbReference>
<dbReference type="PROSITE" id="PS01348">
    <property type="entry name" value="MRAY_2"/>
    <property type="match status" value="1"/>
</dbReference>
<feature type="chain" id="PRO_1000090632" description="Phospho-N-acetylmuramoyl-pentapeptide-transferase">
    <location>
        <begin position="1"/>
        <end position="353"/>
    </location>
</feature>
<feature type="transmembrane region" description="Helical" evidence="1">
    <location>
        <begin position="24"/>
        <end position="44"/>
    </location>
</feature>
<feature type="transmembrane region" description="Helical" evidence="1">
    <location>
        <begin position="66"/>
        <end position="86"/>
    </location>
</feature>
<feature type="transmembrane region" description="Helical" evidence="1">
    <location>
        <begin position="88"/>
        <end position="108"/>
    </location>
</feature>
<feature type="transmembrane region" description="Helical" evidence="1">
    <location>
        <begin position="129"/>
        <end position="149"/>
    </location>
</feature>
<feature type="transmembrane region" description="Helical" evidence="1">
    <location>
        <begin position="160"/>
        <end position="180"/>
    </location>
</feature>
<feature type="transmembrane region" description="Helical" evidence="1">
    <location>
        <begin position="192"/>
        <end position="212"/>
    </location>
</feature>
<feature type="transmembrane region" description="Helical" evidence="1">
    <location>
        <begin position="229"/>
        <end position="249"/>
    </location>
</feature>
<feature type="transmembrane region" description="Helical" evidence="1">
    <location>
        <begin position="256"/>
        <end position="276"/>
    </location>
</feature>
<feature type="transmembrane region" description="Helical" evidence="1">
    <location>
        <begin position="281"/>
        <end position="301"/>
    </location>
</feature>
<feature type="transmembrane region" description="Helical" evidence="1">
    <location>
        <begin position="330"/>
        <end position="350"/>
    </location>
</feature>
<protein>
    <recommendedName>
        <fullName evidence="1">Phospho-N-acetylmuramoyl-pentapeptide-transferase</fullName>
        <ecNumber evidence="1">2.7.8.13</ecNumber>
    </recommendedName>
    <alternativeName>
        <fullName evidence="1">UDP-MurNAc-pentapeptide phosphotransferase</fullName>
    </alternativeName>
</protein>